<protein>
    <recommendedName>
        <fullName evidence="1">Lipoyl synthase</fullName>
        <ecNumber evidence="1">2.8.1.8</ecNumber>
    </recommendedName>
    <alternativeName>
        <fullName evidence="1">Lip-syn</fullName>
        <shortName evidence="1">LS</shortName>
    </alternativeName>
    <alternativeName>
        <fullName evidence="1">Lipoate synthase</fullName>
    </alternativeName>
    <alternativeName>
        <fullName evidence="1">Lipoic acid synthase</fullName>
    </alternativeName>
    <alternativeName>
        <fullName evidence="1">Sulfur insertion protein LipA</fullName>
    </alternativeName>
</protein>
<organism>
    <name type="scientific">Staphylococcus aureus (strain COL)</name>
    <dbReference type="NCBI Taxonomy" id="93062"/>
    <lineage>
        <taxon>Bacteria</taxon>
        <taxon>Bacillati</taxon>
        <taxon>Bacillota</taxon>
        <taxon>Bacilli</taxon>
        <taxon>Bacillales</taxon>
        <taxon>Staphylococcaceae</taxon>
        <taxon>Staphylococcus</taxon>
    </lineage>
</organism>
<gene>
    <name evidence="1" type="primary">lipA</name>
    <name type="ordered locus">SACOL0927</name>
</gene>
<accession>Q5HHG0</accession>
<name>LIPA_STAAC</name>
<feature type="chain" id="PRO_0000102357" description="Lipoyl synthase">
    <location>
        <begin position="1"/>
        <end position="305"/>
    </location>
</feature>
<feature type="domain" description="Radical SAM core" evidence="2">
    <location>
        <begin position="54"/>
        <end position="270"/>
    </location>
</feature>
<feature type="region of interest" description="Disordered" evidence="3">
    <location>
        <begin position="283"/>
        <end position="305"/>
    </location>
</feature>
<feature type="compositionally biased region" description="Basic and acidic residues" evidence="3">
    <location>
        <begin position="283"/>
        <end position="298"/>
    </location>
</feature>
<feature type="binding site" evidence="1">
    <location>
        <position position="41"/>
    </location>
    <ligand>
        <name>[4Fe-4S] cluster</name>
        <dbReference type="ChEBI" id="CHEBI:49883"/>
        <label>1</label>
    </ligand>
</feature>
<feature type="binding site" evidence="1">
    <location>
        <position position="46"/>
    </location>
    <ligand>
        <name>[4Fe-4S] cluster</name>
        <dbReference type="ChEBI" id="CHEBI:49883"/>
        <label>1</label>
    </ligand>
</feature>
<feature type="binding site" evidence="1">
    <location>
        <position position="52"/>
    </location>
    <ligand>
        <name>[4Fe-4S] cluster</name>
        <dbReference type="ChEBI" id="CHEBI:49883"/>
        <label>1</label>
    </ligand>
</feature>
<feature type="binding site" evidence="1">
    <location>
        <position position="68"/>
    </location>
    <ligand>
        <name>[4Fe-4S] cluster</name>
        <dbReference type="ChEBI" id="CHEBI:49883"/>
        <label>2</label>
        <note>4Fe-4S-S-AdoMet</note>
    </ligand>
</feature>
<feature type="binding site" evidence="1">
    <location>
        <position position="72"/>
    </location>
    <ligand>
        <name>[4Fe-4S] cluster</name>
        <dbReference type="ChEBI" id="CHEBI:49883"/>
        <label>2</label>
        <note>4Fe-4S-S-AdoMet</note>
    </ligand>
</feature>
<feature type="binding site" evidence="1">
    <location>
        <position position="75"/>
    </location>
    <ligand>
        <name>[4Fe-4S] cluster</name>
        <dbReference type="ChEBI" id="CHEBI:49883"/>
        <label>2</label>
        <note>4Fe-4S-S-AdoMet</note>
    </ligand>
</feature>
<feature type="binding site" evidence="1">
    <location>
        <position position="281"/>
    </location>
    <ligand>
        <name>[4Fe-4S] cluster</name>
        <dbReference type="ChEBI" id="CHEBI:49883"/>
        <label>1</label>
    </ligand>
</feature>
<keyword id="KW-0004">4Fe-4S</keyword>
<keyword id="KW-0963">Cytoplasm</keyword>
<keyword id="KW-0408">Iron</keyword>
<keyword id="KW-0411">Iron-sulfur</keyword>
<keyword id="KW-0479">Metal-binding</keyword>
<keyword id="KW-0949">S-adenosyl-L-methionine</keyword>
<keyword id="KW-0808">Transferase</keyword>
<evidence type="ECO:0000255" key="1">
    <source>
        <dbReference type="HAMAP-Rule" id="MF_00206"/>
    </source>
</evidence>
<evidence type="ECO:0000255" key="2">
    <source>
        <dbReference type="PROSITE-ProRule" id="PRU01266"/>
    </source>
</evidence>
<evidence type="ECO:0000256" key="3">
    <source>
        <dbReference type="SAM" id="MobiDB-lite"/>
    </source>
</evidence>
<reference key="1">
    <citation type="journal article" date="2005" name="J. Bacteriol.">
        <title>Insights on evolution of virulence and resistance from the complete genome analysis of an early methicillin-resistant Staphylococcus aureus strain and a biofilm-producing methicillin-resistant Staphylococcus epidermidis strain.</title>
        <authorList>
            <person name="Gill S.R."/>
            <person name="Fouts D.E."/>
            <person name="Archer G.L."/>
            <person name="Mongodin E.F."/>
            <person name="DeBoy R.T."/>
            <person name="Ravel J."/>
            <person name="Paulsen I.T."/>
            <person name="Kolonay J.F."/>
            <person name="Brinkac L.M."/>
            <person name="Beanan M.J."/>
            <person name="Dodson R.J."/>
            <person name="Daugherty S.C."/>
            <person name="Madupu R."/>
            <person name="Angiuoli S.V."/>
            <person name="Durkin A.S."/>
            <person name="Haft D.H."/>
            <person name="Vamathevan J.J."/>
            <person name="Khouri H."/>
            <person name="Utterback T.R."/>
            <person name="Lee C."/>
            <person name="Dimitrov G."/>
            <person name="Jiang L."/>
            <person name="Qin H."/>
            <person name="Weidman J."/>
            <person name="Tran K."/>
            <person name="Kang K.H."/>
            <person name="Hance I.R."/>
            <person name="Nelson K.E."/>
            <person name="Fraser C.M."/>
        </authorList>
    </citation>
    <scope>NUCLEOTIDE SEQUENCE [LARGE SCALE GENOMIC DNA]</scope>
    <source>
        <strain>COL</strain>
    </source>
</reference>
<comment type="function">
    <text evidence="1">Catalyzes the radical-mediated insertion of two sulfur atoms into the C-6 and C-8 positions of the octanoyl moiety bound to the lipoyl domains of lipoate-dependent enzymes, thereby converting the octanoylated domains into lipoylated derivatives.</text>
</comment>
<comment type="catalytic activity">
    <reaction evidence="1">
        <text>[[Fe-S] cluster scaffold protein carrying a second [4Fe-4S](2+) cluster] + N(6)-octanoyl-L-lysyl-[protein] + 2 oxidized [2Fe-2S]-[ferredoxin] + 2 S-adenosyl-L-methionine + 4 H(+) = [[Fe-S] cluster scaffold protein] + N(6)-[(R)-dihydrolipoyl]-L-lysyl-[protein] + 4 Fe(3+) + 2 hydrogen sulfide + 2 5'-deoxyadenosine + 2 L-methionine + 2 reduced [2Fe-2S]-[ferredoxin]</text>
        <dbReference type="Rhea" id="RHEA:16585"/>
        <dbReference type="Rhea" id="RHEA-COMP:9928"/>
        <dbReference type="Rhea" id="RHEA-COMP:10000"/>
        <dbReference type="Rhea" id="RHEA-COMP:10001"/>
        <dbReference type="Rhea" id="RHEA-COMP:10475"/>
        <dbReference type="Rhea" id="RHEA-COMP:14568"/>
        <dbReference type="Rhea" id="RHEA-COMP:14569"/>
        <dbReference type="ChEBI" id="CHEBI:15378"/>
        <dbReference type="ChEBI" id="CHEBI:17319"/>
        <dbReference type="ChEBI" id="CHEBI:29034"/>
        <dbReference type="ChEBI" id="CHEBI:29919"/>
        <dbReference type="ChEBI" id="CHEBI:33722"/>
        <dbReference type="ChEBI" id="CHEBI:33737"/>
        <dbReference type="ChEBI" id="CHEBI:33738"/>
        <dbReference type="ChEBI" id="CHEBI:57844"/>
        <dbReference type="ChEBI" id="CHEBI:59789"/>
        <dbReference type="ChEBI" id="CHEBI:78809"/>
        <dbReference type="ChEBI" id="CHEBI:83100"/>
        <dbReference type="EC" id="2.8.1.8"/>
    </reaction>
</comment>
<comment type="cofactor">
    <cofactor evidence="1">
        <name>[4Fe-4S] cluster</name>
        <dbReference type="ChEBI" id="CHEBI:49883"/>
    </cofactor>
    <text evidence="1">Binds 2 [4Fe-4S] clusters per subunit. One cluster is coordinated with 3 cysteines and an exchangeable S-adenosyl-L-methionine.</text>
</comment>
<comment type="pathway">
    <text evidence="1">Protein modification; protein lipoylation via endogenous pathway; protein N(6)-(lipoyl)lysine from octanoyl-[acyl-carrier-protein].</text>
</comment>
<comment type="subcellular location">
    <subcellularLocation>
        <location evidence="1">Cytoplasm</location>
    </subcellularLocation>
</comment>
<comment type="similarity">
    <text evidence="1">Belongs to the radical SAM superfamily. Lipoyl synthase family.</text>
</comment>
<dbReference type="EC" id="2.8.1.8" evidence="1"/>
<dbReference type="EMBL" id="CP000046">
    <property type="protein sequence ID" value="AAW37896.1"/>
    <property type="molecule type" value="Genomic_DNA"/>
</dbReference>
<dbReference type="RefSeq" id="WP_000201875.1">
    <property type="nucleotide sequence ID" value="NZ_JBGOFO010000002.1"/>
</dbReference>
<dbReference type="SMR" id="Q5HHG0"/>
<dbReference type="GeneID" id="98345243"/>
<dbReference type="KEGG" id="sac:SACOL0927"/>
<dbReference type="HOGENOM" id="CLU_033144_2_1_9"/>
<dbReference type="Proteomes" id="UP000000530">
    <property type="component" value="Chromosome"/>
</dbReference>
<dbReference type="GO" id="GO:0005737">
    <property type="term" value="C:cytoplasm"/>
    <property type="evidence" value="ECO:0007669"/>
    <property type="project" value="UniProtKB-SubCell"/>
</dbReference>
<dbReference type="GO" id="GO:0051539">
    <property type="term" value="F:4 iron, 4 sulfur cluster binding"/>
    <property type="evidence" value="ECO:0007669"/>
    <property type="project" value="UniProtKB-UniRule"/>
</dbReference>
<dbReference type="GO" id="GO:0016992">
    <property type="term" value="F:lipoate synthase activity"/>
    <property type="evidence" value="ECO:0007669"/>
    <property type="project" value="UniProtKB-UniRule"/>
</dbReference>
<dbReference type="GO" id="GO:0046872">
    <property type="term" value="F:metal ion binding"/>
    <property type="evidence" value="ECO:0007669"/>
    <property type="project" value="UniProtKB-KW"/>
</dbReference>
<dbReference type="CDD" id="cd01335">
    <property type="entry name" value="Radical_SAM"/>
    <property type="match status" value="1"/>
</dbReference>
<dbReference type="FunFam" id="3.20.20.70:FF:000040">
    <property type="entry name" value="Lipoyl synthase"/>
    <property type="match status" value="1"/>
</dbReference>
<dbReference type="Gene3D" id="3.20.20.70">
    <property type="entry name" value="Aldolase class I"/>
    <property type="match status" value="1"/>
</dbReference>
<dbReference type="HAMAP" id="MF_00206">
    <property type="entry name" value="Lipoyl_synth"/>
    <property type="match status" value="1"/>
</dbReference>
<dbReference type="InterPro" id="IPR013785">
    <property type="entry name" value="Aldolase_TIM"/>
</dbReference>
<dbReference type="InterPro" id="IPR006638">
    <property type="entry name" value="Elp3/MiaA/NifB-like_rSAM"/>
</dbReference>
<dbReference type="InterPro" id="IPR031691">
    <property type="entry name" value="LIAS_N"/>
</dbReference>
<dbReference type="InterPro" id="IPR003698">
    <property type="entry name" value="Lipoyl_synth"/>
</dbReference>
<dbReference type="InterPro" id="IPR007197">
    <property type="entry name" value="rSAM"/>
</dbReference>
<dbReference type="NCBIfam" id="TIGR00510">
    <property type="entry name" value="lipA"/>
    <property type="match status" value="1"/>
</dbReference>
<dbReference type="NCBIfam" id="NF004019">
    <property type="entry name" value="PRK05481.1"/>
    <property type="match status" value="1"/>
</dbReference>
<dbReference type="NCBIfam" id="NF009544">
    <property type="entry name" value="PRK12928.1"/>
    <property type="match status" value="1"/>
</dbReference>
<dbReference type="PANTHER" id="PTHR10949">
    <property type="entry name" value="LIPOYL SYNTHASE"/>
    <property type="match status" value="1"/>
</dbReference>
<dbReference type="PANTHER" id="PTHR10949:SF0">
    <property type="entry name" value="LIPOYL SYNTHASE, MITOCHONDRIAL"/>
    <property type="match status" value="1"/>
</dbReference>
<dbReference type="Pfam" id="PF16881">
    <property type="entry name" value="LIAS_N"/>
    <property type="match status" value="1"/>
</dbReference>
<dbReference type="Pfam" id="PF04055">
    <property type="entry name" value="Radical_SAM"/>
    <property type="match status" value="1"/>
</dbReference>
<dbReference type="PIRSF" id="PIRSF005963">
    <property type="entry name" value="Lipoyl_synth"/>
    <property type="match status" value="1"/>
</dbReference>
<dbReference type="SFLD" id="SFLDF00271">
    <property type="entry name" value="lipoyl_synthase"/>
    <property type="match status" value="1"/>
</dbReference>
<dbReference type="SFLD" id="SFLDS00029">
    <property type="entry name" value="Radical_SAM"/>
    <property type="match status" value="1"/>
</dbReference>
<dbReference type="SMART" id="SM00729">
    <property type="entry name" value="Elp3"/>
    <property type="match status" value="1"/>
</dbReference>
<dbReference type="SUPFAM" id="SSF102114">
    <property type="entry name" value="Radical SAM enzymes"/>
    <property type="match status" value="1"/>
</dbReference>
<dbReference type="PROSITE" id="PS51918">
    <property type="entry name" value="RADICAL_SAM"/>
    <property type="match status" value="1"/>
</dbReference>
<sequence length="305" mass="34885">MATKNEEILRKPDWLKIKLNTNENYTGLKKMMREKNLNTVCEEAKCPNIHECWGARRTATFMILGAVCTRACRFCAVKTGLPNELDLNEPERVAESVELMNLKHVVITAVARDDLRDAGSNVYAETVRKVRERNPFTTIEILPSDMGGDYDALETLMASRPDILNHNIETVRRLTPRVRARATYDRTLEFLRRSKELQPDIPTKSSIMVGLGETIEEIYETMDDLRANDVDILTIGQYLQPSRKHLKVQKYYTPLEFGKLRKVAMDKGFKHCQAGPLVRSSYHADEQVNEAAKEKQRQGEAQLNS</sequence>
<proteinExistence type="inferred from homology"/>